<evidence type="ECO:0000250" key="1"/>
<evidence type="ECO:0000255" key="2"/>
<evidence type="ECO:0000305" key="3"/>
<name>NPY_LAMFL</name>
<proteinExistence type="evidence at transcript level"/>
<gene>
    <name type="primary">npy</name>
</gene>
<feature type="signal peptide" evidence="2">
    <location>
        <begin position="1"/>
        <end position="34"/>
    </location>
</feature>
<feature type="peptide" id="PRO_0000025345" description="Neuropeptide Y">
    <location>
        <begin position="35"/>
        <end position="70"/>
    </location>
</feature>
<feature type="propeptide" id="PRO_0000025346" description="C-terminal extension">
    <location>
        <begin position="74"/>
        <end position="104"/>
    </location>
</feature>
<feature type="modified residue" description="Tyrosine amide" evidence="1">
    <location>
        <position position="70"/>
    </location>
</feature>
<organism>
    <name type="scientific">Lampetra fluviatilis</name>
    <name type="common">European river lamprey</name>
    <name type="synonym">Petromyzon fluviatilis</name>
    <dbReference type="NCBI Taxonomy" id="7748"/>
    <lineage>
        <taxon>Eukaryota</taxon>
        <taxon>Metazoa</taxon>
        <taxon>Chordata</taxon>
        <taxon>Craniata</taxon>
        <taxon>Vertebrata</taxon>
        <taxon>Cyclostomata</taxon>
        <taxon>Hyperoartia</taxon>
        <taxon>Petromyzontiformes</taxon>
        <taxon>Petromyzontidae</taxon>
        <taxon>Lampetra</taxon>
    </lineage>
</organism>
<reference key="1">
    <citation type="journal article" date="1994" name="J. Neurosci. Res.">
        <title>Neuropeptide role of both peptide YY and neuropeptide Y in vertebrates suggested by abundant expression of their mRNAs in a cyclostome brain.</title>
        <authorList>
            <person name="Soederberg C."/>
            <person name="Pieribone V.A."/>
            <person name="Dahlstrand J."/>
            <person name="Brodin L."/>
            <person name="Larhammar D."/>
        </authorList>
    </citation>
    <scope>NUCLEOTIDE SEQUENCE [MRNA]</scope>
    <source>
        <tissue>Brain</tissue>
        <tissue>Spinal cord</tissue>
    </source>
</reference>
<accession>P48097</accession>
<keyword id="KW-0027">Amidation</keyword>
<keyword id="KW-0165">Cleavage on pair of basic residues</keyword>
<keyword id="KW-0527">Neuropeptide</keyword>
<keyword id="KW-0964">Secreted</keyword>
<keyword id="KW-0732">Signal</keyword>
<protein>
    <recommendedName>
        <fullName>Neuropeptide Y</fullName>
        <shortName>NPY</shortName>
    </recommendedName>
</protein>
<dbReference type="EMBL" id="L22867">
    <property type="protein sequence ID" value="AAA21352.1"/>
    <property type="molecule type" value="mRNA"/>
</dbReference>
<dbReference type="PIR" id="I50808">
    <property type="entry name" value="I50808"/>
</dbReference>
<dbReference type="GO" id="GO:0005615">
    <property type="term" value="C:extracellular space"/>
    <property type="evidence" value="ECO:0007669"/>
    <property type="project" value="TreeGrafter"/>
</dbReference>
<dbReference type="GO" id="GO:0005184">
    <property type="term" value="F:neuropeptide hormone activity"/>
    <property type="evidence" value="ECO:0007669"/>
    <property type="project" value="TreeGrafter"/>
</dbReference>
<dbReference type="GO" id="GO:0031841">
    <property type="term" value="F:neuropeptide Y receptor binding"/>
    <property type="evidence" value="ECO:0007669"/>
    <property type="project" value="TreeGrafter"/>
</dbReference>
<dbReference type="GO" id="GO:0007631">
    <property type="term" value="P:feeding behavior"/>
    <property type="evidence" value="ECO:0007669"/>
    <property type="project" value="TreeGrafter"/>
</dbReference>
<dbReference type="GO" id="GO:0007218">
    <property type="term" value="P:neuropeptide signaling pathway"/>
    <property type="evidence" value="ECO:0007669"/>
    <property type="project" value="UniProtKB-KW"/>
</dbReference>
<dbReference type="CDD" id="cd00126">
    <property type="entry name" value="PAH"/>
    <property type="match status" value="1"/>
</dbReference>
<dbReference type="Gene3D" id="6.10.250.900">
    <property type="match status" value="1"/>
</dbReference>
<dbReference type="InterPro" id="IPR001955">
    <property type="entry name" value="Pancreatic_hormone-like"/>
</dbReference>
<dbReference type="InterPro" id="IPR020392">
    <property type="entry name" value="Pancreatic_hormone-like_CS"/>
</dbReference>
<dbReference type="PANTHER" id="PTHR10533:SF12">
    <property type="match status" value="1"/>
</dbReference>
<dbReference type="PANTHER" id="PTHR10533">
    <property type="entry name" value="NEUROPEPTIDE Y/PANCREATIC HORMONE/PEPTIDE YY"/>
    <property type="match status" value="1"/>
</dbReference>
<dbReference type="Pfam" id="PF00159">
    <property type="entry name" value="Hormone_3"/>
    <property type="match status" value="1"/>
</dbReference>
<dbReference type="PRINTS" id="PR00278">
    <property type="entry name" value="PANCHORMONE"/>
</dbReference>
<dbReference type="SMART" id="SM00309">
    <property type="entry name" value="PAH"/>
    <property type="match status" value="1"/>
</dbReference>
<dbReference type="PROSITE" id="PS00265">
    <property type="entry name" value="PANCREATIC_HORMONE_1"/>
    <property type="match status" value="1"/>
</dbReference>
<dbReference type="PROSITE" id="PS50276">
    <property type="entry name" value="PANCREATIC_HORMONE_2"/>
    <property type="match status" value="1"/>
</dbReference>
<comment type="function">
    <text>NPY is implicated in the control of feeding and in secretion of gonadotrophin-release hormone.</text>
</comment>
<comment type="subcellular location">
    <subcellularLocation>
        <location>Secreted</location>
    </subcellularLocation>
</comment>
<comment type="tissue specificity">
    <text>Lateral brainstem, dorsal spinal cord and retina.</text>
</comment>
<comment type="similarity">
    <text evidence="3">Belongs to the NPY family.</text>
</comment>
<sequence>MMSCFAGTRGSARVWLCAIALCLLASSCARGAAAFPNKPDSPGEDAPAEDLARYLSAVRHYINLITRQRYGKRTLTEPYVPEFIFQENRGDRSSNPRFDSVTMW</sequence>